<comment type="function">
    <text evidence="1">Converts 2-succinylbenzoate (OSB) to 2-succinylbenzoyl-CoA (OSB-CoA).</text>
</comment>
<comment type="catalytic activity">
    <reaction evidence="1">
        <text>2-succinylbenzoate + ATP + CoA = 2-succinylbenzoyl-CoA + AMP + diphosphate</text>
        <dbReference type="Rhea" id="RHEA:17009"/>
        <dbReference type="ChEBI" id="CHEBI:18325"/>
        <dbReference type="ChEBI" id="CHEBI:30616"/>
        <dbReference type="ChEBI" id="CHEBI:33019"/>
        <dbReference type="ChEBI" id="CHEBI:57287"/>
        <dbReference type="ChEBI" id="CHEBI:57364"/>
        <dbReference type="ChEBI" id="CHEBI:456215"/>
        <dbReference type="EC" id="6.2.1.26"/>
    </reaction>
</comment>
<comment type="pathway">
    <text evidence="1">Quinol/quinone metabolism; 1,4-dihydroxy-2-naphthoate biosynthesis; 1,4-dihydroxy-2-naphthoate from chorismate: step 5/7.</text>
</comment>
<comment type="pathway">
    <text evidence="1">Quinol/quinone metabolism; menaquinone biosynthesis.</text>
</comment>
<comment type="similarity">
    <text evidence="1">Belongs to the ATP-dependent AMP-binding enzyme family. MenE subfamily.</text>
</comment>
<name>MENE_STAAC</name>
<protein>
    <recommendedName>
        <fullName evidence="1">2-succinylbenzoate--CoA ligase</fullName>
        <ecNumber evidence="1">6.2.1.26</ecNumber>
    </recommendedName>
    <alternativeName>
        <fullName evidence="1">o-succinylbenzoyl-CoA synthetase</fullName>
        <shortName evidence="1">OSB-CoA synthetase</shortName>
    </alternativeName>
</protein>
<accession>Q5HEY2</accession>
<organism>
    <name type="scientific">Staphylococcus aureus (strain COL)</name>
    <dbReference type="NCBI Taxonomy" id="93062"/>
    <lineage>
        <taxon>Bacteria</taxon>
        <taxon>Bacillati</taxon>
        <taxon>Bacillota</taxon>
        <taxon>Bacilli</taxon>
        <taxon>Bacillales</taxon>
        <taxon>Staphylococcaceae</taxon>
        <taxon>Staphylococcus</taxon>
    </lineage>
</organism>
<proteinExistence type="inferred from homology"/>
<sequence length="492" mass="55415">MDFWLYKQAQQNGHHIAITDGQESYTYQNLYCEASLLAKRLKAYQQSRVGLYIDNSIQSIILIHACWLANIEIAMINTRLTPNEMTNQMKSIDVQLIFCTLPLELRGFQIVSLDDIEFAGRDITTNSLLDNTMGIQYETSNETVVPKESPSNILNTSFNLDDIASIMFTSGTTGPQKAVPQTFRNHYASAIGCKESLGFDRDTNWLSVLPIYHISGLSVLLRAVIEGFTVRIVDKFNAEQILTMIKNERITHISLVPQTLNWLMQQGLHEPYNLQKILLGGAKLSATMIETALQYNLPIYNSFGMTETCSQFLTATPEMLHARPDTVGMPSANVDVKIKNPNKEGHGELMIKGANVMNVYLYPTDLTGTFENGYFNTGDIAEIDHEGYVMIYDRRKDLIISGGENIYPYQIETVAKQFPGISDAVCVGHPDDTWGQVPKLYFVSESDISKAQLIAYLSQHLAKYKVPKHFEKVDTLPYTSTGKLQRNKLYRG</sequence>
<feature type="chain" id="PRO_0000193166" description="2-succinylbenzoate--CoA ligase">
    <location>
        <begin position="1"/>
        <end position="492"/>
    </location>
</feature>
<dbReference type="EC" id="6.2.1.26" evidence="1"/>
<dbReference type="EMBL" id="CP000046">
    <property type="protein sequence ID" value="AAW36862.1"/>
    <property type="molecule type" value="Genomic_DNA"/>
</dbReference>
<dbReference type="RefSeq" id="WP_000348360.1">
    <property type="nucleotide sequence ID" value="NZ_JBGOFO010000013.1"/>
</dbReference>
<dbReference type="SMR" id="Q5HEY2"/>
<dbReference type="KEGG" id="sac:SACOL1844"/>
<dbReference type="HOGENOM" id="CLU_000022_59_0_9"/>
<dbReference type="UniPathway" id="UPA00079"/>
<dbReference type="UniPathway" id="UPA01057">
    <property type="reaction ID" value="UER00166"/>
</dbReference>
<dbReference type="Proteomes" id="UP000000530">
    <property type="component" value="Chromosome"/>
</dbReference>
<dbReference type="GO" id="GO:0005524">
    <property type="term" value="F:ATP binding"/>
    <property type="evidence" value="ECO:0007669"/>
    <property type="project" value="UniProtKB-KW"/>
</dbReference>
<dbReference type="GO" id="GO:0008756">
    <property type="term" value="F:o-succinylbenzoate-CoA ligase activity"/>
    <property type="evidence" value="ECO:0007669"/>
    <property type="project" value="UniProtKB-UniRule"/>
</dbReference>
<dbReference type="GO" id="GO:0009234">
    <property type="term" value="P:menaquinone biosynthetic process"/>
    <property type="evidence" value="ECO:0007669"/>
    <property type="project" value="UniProtKB-UniRule"/>
</dbReference>
<dbReference type="CDD" id="cd05912">
    <property type="entry name" value="OSB_CoA_lg"/>
    <property type="match status" value="1"/>
</dbReference>
<dbReference type="Gene3D" id="3.30.300.30">
    <property type="match status" value="1"/>
</dbReference>
<dbReference type="Gene3D" id="3.40.50.12780">
    <property type="entry name" value="N-terminal domain of ligase-like"/>
    <property type="match status" value="1"/>
</dbReference>
<dbReference type="HAMAP" id="MF_00731">
    <property type="entry name" value="MenE"/>
    <property type="match status" value="1"/>
</dbReference>
<dbReference type="InterPro" id="IPR025110">
    <property type="entry name" value="AMP-bd_C"/>
</dbReference>
<dbReference type="InterPro" id="IPR045851">
    <property type="entry name" value="AMP-bd_C_sf"/>
</dbReference>
<dbReference type="InterPro" id="IPR000873">
    <property type="entry name" value="AMP-dep_synth/lig_dom"/>
</dbReference>
<dbReference type="InterPro" id="IPR042099">
    <property type="entry name" value="ANL_N_sf"/>
</dbReference>
<dbReference type="InterPro" id="IPR050237">
    <property type="entry name" value="ATP-dep_AMP-bd_enzyme"/>
</dbReference>
<dbReference type="InterPro" id="IPR010192">
    <property type="entry name" value="MenE"/>
</dbReference>
<dbReference type="NCBIfam" id="TIGR01923">
    <property type="entry name" value="menE"/>
    <property type="match status" value="1"/>
</dbReference>
<dbReference type="PANTHER" id="PTHR43767">
    <property type="entry name" value="LONG-CHAIN-FATTY-ACID--COA LIGASE"/>
    <property type="match status" value="1"/>
</dbReference>
<dbReference type="PANTHER" id="PTHR43767:SF1">
    <property type="entry name" value="NONRIBOSOMAL PEPTIDE SYNTHASE PES1 (EUROFUNG)-RELATED"/>
    <property type="match status" value="1"/>
</dbReference>
<dbReference type="Pfam" id="PF00501">
    <property type="entry name" value="AMP-binding"/>
    <property type="match status" value="1"/>
</dbReference>
<dbReference type="Pfam" id="PF13193">
    <property type="entry name" value="AMP-binding_C"/>
    <property type="match status" value="1"/>
</dbReference>
<dbReference type="SUPFAM" id="SSF56801">
    <property type="entry name" value="Acetyl-CoA synthetase-like"/>
    <property type="match status" value="1"/>
</dbReference>
<gene>
    <name evidence="1" type="primary">menE</name>
    <name type="ordered locus">SACOL1844</name>
</gene>
<keyword id="KW-0067">ATP-binding</keyword>
<keyword id="KW-0436">Ligase</keyword>
<keyword id="KW-0474">Menaquinone biosynthesis</keyword>
<keyword id="KW-0547">Nucleotide-binding</keyword>
<reference key="1">
    <citation type="journal article" date="2005" name="J. Bacteriol.">
        <title>Insights on evolution of virulence and resistance from the complete genome analysis of an early methicillin-resistant Staphylococcus aureus strain and a biofilm-producing methicillin-resistant Staphylococcus epidermidis strain.</title>
        <authorList>
            <person name="Gill S.R."/>
            <person name="Fouts D.E."/>
            <person name="Archer G.L."/>
            <person name="Mongodin E.F."/>
            <person name="DeBoy R.T."/>
            <person name="Ravel J."/>
            <person name="Paulsen I.T."/>
            <person name="Kolonay J.F."/>
            <person name="Brinkac L.M."/>
            <person name="Beanan M.J."/>
            <person name="Dodson R.J."/>
            <person name="Daugherty S.C."/>
            <person name="Madupu R."/>
            <person name="Angiuoli S.V."/>
            <person name="Durkin A.S."/>
            <person name="Haft D.H."/>
            <person name="Vamathevan J.J."/>
            <person name="Khouri H."/>
            <person name="Utterback T.R."/>
            <person name="Lee C."/>
            <person name="Dimitrov G."/>
            <person name="Jiang L."/>
            <person name="Qin H."/>
            <person name="Weidman J."/>
            <person name="Tran K."/>
            <person name="Kang K.H."/>
            <person name="Hance I.R."/>
            <person name="Nelson K.E."/>
            <person name="Fraser C.M."/>
        </authorList>
    </citation>
    <scope>NUCLEOTIDE SEQUENCE [LARGE SCALE GENOMIC DNA]</scope>
    <source>
        <strain>COL</strain>
    </source>
</reference>
<evidence type="ECO:0000255" key="1">
    <source>
        <dbReference type="HAMAP-Rule" id="MF_00731"/>
    </source>
</evidence>